<keyword id="KW-0240">DNA-directed RNA polymerase</keyword>
<keyword id="KW-0460">Magnesium</keyword>
<keyword id="KW-0479">Metal-binding</keyword>
<keyword id="KW-0548">Nucleotidyltransferase</keyword>
<keyword id="KW-0804">Transcription</keyword>
<keyword id="KW-0808">Transferase</keyword>
<keyword id="KW-0862">Zinc</keyword>
<dbReference type="EC" id="2.7.7.6" evidence="1"/>
<dbReference type="EMBL" id="CR925677">
    <property type="protein sequence ID" value="CAI27618.1"/>
    <property type="molecule type" value="Genomic_DNA"/>
</dbReference>
<dbReference type="RefSeq" id="WP_011255345.1">
    <property type="nucleotide sequence ID" value="NC_006831.1"/>
</dbReference>
<dbReference type="SMR" id="Q5FFD8"/>
<dbReference type="KEGG" id="erg:ERGA_CDS_01660"/>
<dbReference type="HOGENOM" id="CLU_000524_3_1_5"/>
<dbReference type="OrthoDB" id="9815296at2"/>
<dbReference type="Proteomes" id="UP000000533">
    <property type="component" value="Chromosome"/>
</dbReference>
<dbReference type="GO" id="GO:0000428">
    <property type="term" value="C:DNA-directed RNA polymerase complex"/>
    <property type="evidence" value="ECO:0007669"/>
    <property type="project" value="UniProtKB-KW"/>
</dbReference>
<dbReference type="GO" id="GO:0003677">
    <property type="term" value="F:DNA binding"/>
    <property type="evidence" value="ECO:0007669"/>
    <property type="project" value="UniProtKB-UniRule"/>
</dbReference>
<dbReference type="GO" id="GO:0003899">
    <property type="term" value="F:DNA-directed RNA polymerase activity"/>
    <property type="evidence" value="ECO:0007669"/>
    <property type="project" value="UniProtKB-UniRule"/>
</dbReference>
<dbReference type="GO" id="GO:0000287">
    <property type="term" value="F:magnesium ion binding"/>
    <property type="evidence" value="ECO:0007669"/>
    <property type="project" value="UniProtKB-UniRule"/>
</dbReference>
<dbReference type="GO" id="GO:0008270">
    <property type="term" value="F:zinc ion binding"/>
    <property type="evidence" value="ECO:0007669"/>
    <property type="project" value="UniProtKB-UniRule"/>
</dbReference>
<dbReference type="GO" id="GO:0006351">
    <property type="term" value="P:DNA-templated transcription"/>
    <property type="evidence" value="ECO:0007669"/>
    <property type="project" value="UniProtKB-UniRule"/>
</dbReference>
<dbReference type="CDD" id="cd02655">
    <property type="entry name" value="RNAP_beta'_C"/>
    <property type="match status" value="1"/>
</dbReference>
<dbReference type="CDD" id="cd01609">
    <property type="entry name" value="RNAP_beta'_N"/>
    <property type="match status" value="1"/>
</dbReference>
<dbReference type="Gene3D" id="1.10.132.30">
    <property type="match status" value="1"/>
</dbReference>
<dbReference type="Gene3D" id="1.10.150.390">
    <property type="match status" value="1"/>
</dbReference>
<dbReference type="Gene3D" id="1.10.1790.20">
    <property type="match status" value="1"/>
</dbReference>
<dbReference type="Gene3D" id="1.10.40.90">
    <property type="match status" value="1"/>
</dbReference>
<dbReference type="Gene3D" id="2.40.40.20">
    <property type="match status" value="1"/>
</dbReference>
<dbReference type="Gene3D" id="2.40.50.100">
    <property type="match status" value="3"/>
</dbReference>
<dbReference type="Gene3D" id="4.10.860.120">
    <property type="entry name" value="RNA polymerase II, clamp domain"/>
    <property type="match status" value="1"/>
</dbReference>
<dbReference type="Gene3D" id="1.10.274.100">
    <property type="entry name" value="RNA polymerase Rpb1, domain 3"/>
    <property type="match status" value="1"/>
</dbReference>
<dbReference type="HAMAP" id="MF_01322">
    <property type="entry name" value="RNApol_bact_RpoC"/>
    <property type="match status" value="1"/>
</dbReference>
<dbReference type="InterPro" id="IPR045867">
    <property type="entry name" value="DNA-dir_RpoC_beta_prime"/>
</dbReference>
<dbReference type="InterPro" id="IPR012754">
    <property type="entry name" value="DNA-dir_RpoC_beta_prime_bact"/>
</dbReference>
<dbReference type="InterPro" id="IPR000722">
    <property type="entry name" value="RNA_pol_asu"/>
</dbReference>
<dbReference type="InterPro" id="IPR006592">
    <property type="entry name" value="RNA_pol_N"/>
</dbReference>
<dbReference type="InterPro" id="IPR007080">
    <property type="entry name" value="RNA_pol_Rpb1_1"/>
</dbReference>
<dbReference type="InterPro" id="IPR007066">
    <property type="entry name" value="RNA_pol_Rpb1_3"/>
</dbReference>
<dbReference type="InterPro" id="IPR042102">
    <property type="entry name" value="RNA_pol_Rpb1_3_sf"/>
</dbReference>
<dbReference type="InterPro" id="IPR007083">
    <property type="entry name" value="RNA_pol_Rpb1_4"/>
</dbReference>
<dbReference type="InterPro" id="IPR007081">
    <property type="entry name" value="RNA_pol_Rpb1_5"/>
</dbReference>
<dbReference type="InterPro" id="IPR044893">
    <property type="entry name" value="RNA_pol_Rpb1_clamp_domain"/>
</dbReference>
<dbReference type="InterPro" id="IPR038120">
    <property type="entry name" value="Rpb1_funnel_sf"/>
</dbReference>
<dbReference type="NCBIfam" id="TIGR02386">
    <property type="entry name" value="rpoC_TIGR"/>
    <property type="match status" value="1"/>
</dbReference>
<dbReference type="PANTHER" id="PTHR19376">
    <property type="entry name" value="DNA-DIRECTED RNA POLYMERASE"/>
    <property type="match status" value="1"/>
</dbReference>
<dbReference type="PANTHER" id="PTHR19376:SF54">
    <property type="entry name" value="DNA-DIRECTED RNA POLYMERASE SUBUNIT BETA"/>
    <property type="match status" value="1"/>
</dbReference>
<dbReference type="Pfam" id="PF04997">
    <property type="entry name" value="RNA_pol_Rpb1_1"/>
    <property type="match status" value="1"/>
</dbReference>
<dbReference type="Pfam" id="PF00623">
    <property type="entry name" value="RNA_pol_Rpb1_2"/>
    <property type="match status" value="2"/>
</dbReference>
<dbReference type="Pfam" id="PF04983">
    <property type="entry name" value="RNA_pol_Rpb1_3"/>
    <property type="match status" value="1"/>
</dbReference>
<dbReference type="Pfam" id="PF05000">
    <property type="entry name" value="RNA_pol_Rpb1_4"/>
    <property type="match status" value="1"/>
</dbReference>
<dbReference type="Pfam" id="PF04998">
    <property type="entry name" value="RNA_pol_Rpb1_5"/>
    <property type="match status" value="1"/>
</dbReference>
<dbReference type="SMART" id="SM00663">
    <property type="entry name" value="RPOLA_N"/>
    <property type="match status" value="1"/>
</dbReference>
<dbReference type="SUPFAM" id="SSF64484">
    <property type="entry name" value="beta and beta-prime subunits of DNA dependent RNA-polymerase"/>
    <property type="match status" value="1"/>
</dbReference>
<name>RPOC_EHRRG</name>
<organism>
    <name type="scientific">Ehrlichia ruminantium (strain Gardel)</name>
    <dbReference type="NCBI Taxonomy" id="302409"/>
    <lineage>
        <taxon>Bacteria</taxon>
        <taxon>Pseudomonadati</taxon>
        <taxon>Pseudomonadota</taxon>
        <taxon>Alphaproteobacteria</taxon>
        <taxon>Rickettsiales</taxon>
        <taxon>Anaplasmataceae</taxon>
        <taxon>Ehrlichia</taxon>
    </lineage>
</organism>
<protein>
    <recommendedName>
        <fullName evidence="1">DNA-directed RNA polymerase subunit beta'</fullName>
        <shortName evidence="1">RNAP subunit beta'</shortName>
        <ecNumber evidence="1">2.7.7.6</ecNumber>
    </recommendedName>
    <alternativeName>
        <fullName evidence="1">RNA polymerase subunit beta'</fullName>
    </alternativeName>
    <alternativeName>
        <fullName evidence="1">Transcriptase subunit beta'</fullName>
    </alternativeName>
</protein>
<sequence length="1411" mass="157171">MKMLDLYGYTSIAQSFDKICISIASPESIRAMSYGEIKDISTTNYRTFKVEKGGLFCPKIFGPVNDDECLCGKYRKKRYRGVICEKCGVEVTSSKVRRERMGHIELVSPVAHVWFLKSLPSRIGALLDMPLKLIESILYSGDFVVIDPIATPLSKGEVISESAYNQAKDNYGEDSFIALTGAEAIRELLVRLDLHAINANLRSELESTTSEMKRKKIVKRLRIVENFINSGNKPEWMILTVIPILPPDLRPLVSLENGRPAVSDLNHHYRTIINRNNRLGKLLKLNPPAIMIRNEKRMLQEAVDALFDSTRRSYVSNKAGSVGYKKSLSDMLKGKQGRFRQNLLGKRVDYSGRSVIVVGPNLKLHQCGLPKKMALELFKPFICSKLKMYGIVPTVKLANKMIQNEKPEVWDILDEVIHEHPILLNRAPTLHRLGIQAFDPVLIEGKAIQLHPLVCSAFNADFDGDQMAVHIPLSLEAQLEARILMMSTNNILSPSNGKPIIVPSKDIILGIYYLTLQDYVEPEEILFFGDFSHVEYALHNKDIHICSKIKYKMNYCTDSSDGSGPTYYSKIVETTPGRLMLWQIFPEHKNLTFDLVNQVLTVKEITAIVDLVYRSCGQSETVEFSDKLMSLGFRYASQSGISFGRMDMIIPDTKTMHVDNASEKIKEFAVQYQDGLITKSERYNKVIDEWSKCTDLIAKDMMKAISVYDEESKLNSIYMMAHSGARGSASQMKQLAGMRGLMAKPSGEIIETPIISNFREGLNVFEYFNSTHGARKGLADTALKTANSGYLTRRLVDVAQDCIVVEYDCKTHNGFAMRSVIDGGTVVETLDNIILGRVAAVDIYNPITEELLVNAGELIDEAKVEKIRIAGLDAVKVRSPLTCEAKKGICALCYGRDLAIGDVVSIGEAVGVIAAQSVGEPGTQLTMRTFHVGGTAMRGVETSNLIAMLDAKVKLVNSNVVEDKYGNKIVMSRSCDVVLLDSVGNEKMRHSVPYGARLYVNDGQLVKITEKIADWDPYTMPIITEKTGIIKYMDLIDGVSINEVLDESTGISNRVVVDWKLHLQGANLRPRLVLVNDNGDIITLSSGLEANYFIPIGAVLSVQDGQKVHAGDVITRIPRESIKTRDITGGLPRVIELFEARRPKEHAIVSDIDGYVEFGKDYYRSKRRIFIKPVDDKLSPVEYLVPKGKHTIVNEGDFVHKGDLLMDGDPDPHDILRVLGVEALANYMIAEIQQVYRLQGVRIDNKHIEVILRQMLQKVEIFEPGDTMYLIGENVDVEEVLKTNSNMEKIGKSPAKYIPILQGITRASLDTNSFVSAASFQETTKVLTEAAFSGKEDSLYGLKENVIVGRLIPAGTGFLMNKIKKLSLLNKDDYSMYYNSEYQDLASIEAGHACSVSPSQGVSDTSGAVDY</sequence>
<gene>
    <name evidence="1" type="primary">rpoC</name>
    <name type="ordered locus">ERGA_CDS_01660</name>
</gene>
<reference key="1">
    <citation type="journal article" date="2006" name="J. Bacteriol.">
        <title>Comparative genomic analysis of three strains of Ehrlichia ruminantium reveals an active process of genome size plasticity.</title>
        <authorList>
            <person name="Frutos R."/>
            <person name="Viari A."/>
            <person name="Ferraz C."/>
            <person name="Morgat A."/>
            <person name="Eychenie S."/>
            <person name="Kandassamy Y."/>
            <person name="Chantal I."/>
            <person name="Bensaid A."/>
            <person name="Coissac E."/>
            <person name="Vachiery N."/>
            <person name="Demaille J."/>
            <person name="Martinez D."/>
        </authorList>
    </citation>
    <scope>NUCLEOTIDE SEQUENCE [LARGE SCALE GENOMIC DNA]</scope>
    <source>
        <strain>Gardel</strain>
    </source>
</reference>
<accession>Q5FFD8</accession>
<feature type="chain" id="PRO_0000225534" description="DNA-directed RNA polymerase subunit beta'">
    <location>
        <begin position="1"/>
        <end position="1411"/>
    </location>
</feature>
<feature type="binding site" evidence="1">
    <location>
        <position position="69"/>
    </location>
    <ligand>
        <name>Zn(2+)</name>
        <dbReference type="ChEBI" id="CHEBI:29105"/>
        <label>1</label>
    </ligand>
</feature>
<feature type="binding site" evidence="1">
    <location>
        <position position="71"/>
    </location>
    <ligand>
        <name>Zn(2+)</name>
        <dbReference type="ChEBI" id="CHEBI:29105"/>
        <label>1</label>
    </ligand>
</feature>
<feature type="binding site" evidence="1">
    <location>
        <position position="84"/>
    </location>
    <ligand>
        <name>Zn(2+)</name>
        <dbReference type="ChEBI" id="CHEBI:29105"/>
        <label>1</label>
    </ligand>
</feature>
<feature type="binding site" evidence="1">
    <location>
        <position position="87"/>
    </location>
    <ligand>
        <name>Zn(2+)</name>
        <dbReference type="ChEBI" id="CHEBI:29105"/>
        <label>1</label>
    </ligand>
</feature>
<feature type="binding site" evidence="1">
    <location>
        <position position="461"/>
    </location>
    <ligand>
        <name>Mg(2+)</name>
        <dbReference type="ChEBI" id="CHEBI:18420"/>
    </ligand>
</feature>
<feature type="binding site" evidence="1">
    <location>
        <position position="463"/>
    </location>
    <ligand>
        <name>Mg(2+)</name>
        <dbReference type="ChEBI" id="CHEBI:18420"/>
    </ligand>
</feature>
<feature type="binding site" evidence="1">
    <location>
        <position position="465"/>
    </location>
    <ligand>
        <name>Mg(2+)</name>
        <dbReference type="ChEBI" id="CHEBI:18420"/>
    </ligand>
</feature>
<feature type="binding site" evidence="1">
    <location>
        <position position="809"/>
    </location>
    <ligand>
        <name>Zn(2+)</name>
        <dbReference type="ChEBI" id="CHEBI:29105"/>
        <label>2</label>
    </ligand>
</feature>
<feature type="binding site" evidence="1">
    <location>
        <position position="883"/>
    </location>
    <ligand>
        <name>Zn(2+)</name>
        <dbReference type="ChEBI" id="CHEBI:29105"/>
        <label>2</label>
    </ligand>
</feature>
<feature type="binding site" evidence="1">
    <location>
        <position position="890"/>
    </location>
    <ligand>
        <name>Zn(2+)</name>
        <dbReference type="ChEBI" id="CHEBI:29105"/>
        <label>2</label>
    </ligand>
</feature>
<feature type="binding site" evidence="1">
    <location>
        <position position="893"/>
    </location>
    <ligand>
        <name>Zn(2+)</name>
        <dbReference type="ChEBI" id="CHEBI:29105"/>
        <label>2</label>
    </ligand>
</feature>
<comment type="function">
    <text evidence="1">DNA-dependent RNA polymerase catalyzes the transcription of DNA into RNA using the four ribonucleoside triphosphates as substrates.</text>
</comment>
<comment type="catalytic activity">
    <reaction evidence="1">
        <text>RNA(n) + a ribonucleoside 5'-triphosphate = RNA(n+1) + diphosphate</text>
        <dbReference type="Rhea" id="RHEA:21248"/>
        <dbReference type="Rhea" id="RHEA-COMP:14527"/>
        <dbReference type="Rhea" id="RHEA-COMP:17342"/>
        <dbReference type="ChEBI" id="CHEBI:33019"/>
        <dbReference type="ChEBI" id="CHEBI:61557"/>
        <dbReference type="ChEBI" id="CHEBI:140395"/>
        <dbReference type="EC" id="2.7.7.6"/>
    </reaction>
</comment>
<comment type="cofactor">
    <cofactor evidence="1">
        <name>Mg(2+)</name>
        <dbReference type="ChEBI" id="CHEBI:18420"/>
    </cofactor>
    <text evidence="1">Binds 1 Mg(2+) ion per subunit.</text>
</comment>
<comment type="cofactor">
    <cofactor evidence="1">
        <name>Zn(2+)</name>
        <dbReference type="ChEBI" id="CHEBI:29105"/>
    </cofactor>
    <text evidence="1">Binds 2 Zn(2+) ions per subunit.</text>
</comment>
<comment type="subunit">
    <text evidence="1">The RNAP catalytic core consists of 2 alpha, 1 beta, 1 beta' and 1 omega subunit. When a sigma factor is associated with the core the holoenzyme is formed, which can initiate transcription.</text>
</comment>
<comment type="similarity">
    <text evidence="1">Belongs to the RNA polymerase beta' chain family.</text>
</comment>
<evidence type="ECO:0000255" key="1">
    <source>
        <dbReference type="HAMAP-Rule" id="MF_01322"/>
    </source>
</evidence>
<proteinExistence type="inferred from homology"/>